<protein>
    <recommendedName>
        <fullName>Dipeptidase 2</fullName>
        <ecNumber evidence="2">3.4.13.19</ecNumber>
    </recommendedName>
</protein>
<keyword id="KW-0224">Dipeptidase</keyword>
<keyword id="KW-1015">Disulfide bond</keyword>
<keyword id="KW-0325">Glycoprotein</keyword>
<keyword id="KW-0336">GPI-anchor</keyword>
<keyword id="KW-0378">Hydrolase</keyword>
<keyword id="KW-0443">Lipid metabolism</keyword>
<keyword id="KW-0449">Lipoprotein</keyword>
<keyword id="KW-0472">Membrane</keyword>
<keyword id="KW-0479">Metal-binding</keyword>
<keyword id="KW-0482">Metalloprotease</keyword>
<keyword id="KW-0645">Protease</keyword>
<keyword id="KW-1185">Reference proteome</keyword>
<keyword id="KW-0732">Signal</keyword>
<keyword id="KW-0862">Zinc</keyword>
<organism>
    <name type="scientific">Rattus norvegicus</name>
    <name type="common">Rat</name>
    <dbReference type="NCBI Taxonomy" id="10116"/>
    <lineage>
        <taxon>Eukaryota</taxon>
        <taxon>Metazoa</taxon>
        <taxon>Chordata</taxon>
        <taxon>Craniata</taxon>
        <taxon>Vertebrata</taxon>
        <taxon>Euteleostomi</taxon>
        <taxon>Mammalia</taxon>
        <taxon>Eutheria</taxon>
        <taxon>Euarchontoglires</taxon>
        <taxon>Glires</taxon>
        <taxon>Rodentia</taxon>
        <taxon>Myomorpha</taxon>
        <taxon>Muroidea</taxon>
        <taxon>Muridae</taxon>
        <taxon>Murinae</taxon>
        <taxon>Rattus</taxon>
    </lineage>
</organism>
<feature type="signal peptide" evidence="4">
    <location>
        <begin position="1"/>
        <end position="30"/>
    </location>
</feature>
<feature type="chain" id="PRO_0000231607" description="Dipeptidase 2">
    <location>
        <begin position="31"/>
        <end position="462"/>
    </location>
</feature>
<feature type="propeptide" id="PRO_0000231608" description="Removed in mature form" evidence="1">
    <location>
        <begin position="463"/>
        <end position="481"/>
    </location>
</feature>
<feature type="region of interest" description="Disordered" evidence="6">
    <location>
        <begin position="434"/>
        <end position="464"/>
    </location>
</feature>
<feature type="compositionally biased region" description="Basic and acidic residues" evidence="6">
    <location>
        <begin position="436"/>
        <end position="450"/>
    </location>
</feature>
<feature type="binding site" evidence="5">
    <location>
        <position position="90"/>
    </location>
    <ligand>
        <name>Zn(2+)</name>
        <dbReference type="ChEBI" id="CHEBI:29105"/>
        <label>1</label>
        <note>catalytic</note>
    </ligand>
</feature>
<feature type="binding site" evidence="5">
    <location>
        <position position="92"/>
    </location>
    <ligand>
        <name>Zn(2+)</name>
        <dbReference type="ChEBI" id="CHEBI:29105"/>
        <label>1</label>
        <note>catalytic</note>
    </ligand>
</feature>
<feature type="binding site" evidence="5">
    <location>
        <position position="189"/>
    </location>
    <ligand>
        <name>Zn(2+)</name>
        <dbReference type="ChEBI" id="CHEBI:29105"/>
        <label>1</label>
        <note>catalytic</note>
    </ligand>
</feature>
<feature type="binding site" evidence="5">
    <location>
        <position position="189"/>
    </location>
    <ligand>
        <name>Zn(2+)</name>
        <dbReference type="ChEBI" id="CHEBI:29105"/>
        <label>2</label>
        <note>catalytic</note>
    </ligand>
</feature>
<feature type="binding site" evidence="5">
    <location>
        <position position="216"/>
    </location>
    <ligand>
        <name>substrate</name>
    </ligand>
</feature>
<feature type="binding site" evidence="5">
    <location>
        <position position="262"/>
    </location>
    <ligand>
        <name>Zn(2+)</name>
        <dbReference type="ChEBI" id="CHEBI:29105"/>
        <label>2</label>
        <note>catalytic</note>
    </ligand>
</feature>
<feature type="binding site" evidence="5">
    <location>
        <position position="283"/>
    </location>
    <ligand>
        <name>Zn(2+)</name>
        <dbReference type="ChEBI" id="CHEBI:29105"/>
        <label>2</label>
        <note>catalytic</note>
    </ligand>
</feature>
<feature type="binding site" evidence="5">
    <location>
        <position position="294"/>
    </location>
    <ligand>
        <name>substrate</name>
    </ligand>
</feature>
<feature type="binding site" evidence="5">
    <location>
        <position position="352"/>
    </location>
    <ligand>
        <name>substrate</name>
    </ligand>
</feature>
<feature type="lipid moiety-binding region" description="GPI-anchor amidated serine" evidence="4">
    <location>
        <position position="462"/>
    </location>
</feature>
<feature type="glycosylation site" description="N-linked (GlcNAc...) asparagine" evidence="4">
    <location>
        <position position="112"/>
    </location>
</feature>
<feature type="glycosylation site" description="N-linked (GlcNAc...) asparagine" evidence="4">
    <location>
        <position position="177"/>
    </location>
</feature>
<feature type="disulfide bond" evidence="5">
    <location>
        <begin position="139"/>
        <end position="218"/>
    </location>
</feature>
<feature type="disulfide bond" evidence="5">
    <location>
        <begin position="290"/>
        <end position="322"/>
    </location>
</feature>
<feature type="disulfide bond" description="Interchain" evidence="5">
    <location>
        <position position="427"/>
    </location>
</feature>
<reference key="1">
    <citation type="journal article" date="2004" name="Genome Res.">
        <title>The status, quality, and expansion of the NIH full-length cDNA project: the Mammalian Gene Collection (MGC).</title>
        <authorList>
            <consortium name="The MGC Project Team"/>
        </authorList>
    </citation>
    <scope>NUCLEOTIDE SEQUENCE [LARGE SCALE MRNA]</scope>
    <source>
        <tissue>Spleen</tissue>
    </source>
</reference>
<comment type="function">
    <text evidence="3">Dipeptidase that hydrolyzes leukotriene D4 (LTD4) into leukotriene E4 (LTE4) and cystinyl-bis-glycine.</text>
</comment>
<comment type="function">
    <text evidence="2">Independently of its dipeptidase activity can also modulate macrophage inflammatory response by acting as a regulator of NF-kappa-B inflammatory signaling pathway.</text>
</comment>
<comment type="catalytic activity">
    <reaction evidence="2 5">
        <text>an L-aminoacyl-L-amino acid + H2O = 2 an L-alpha-amino acid</text>
        <dbReference type="Rhea" id="RHEA:48940"/>
        <dbReference type="ChEBI" id="CHEBI:15377"/>
        <dbReference type="ChEBI" id="CHEBI:59869"/>
        <dbReference type="ChEBI" id="CHEBI:77460"/>
        <dbReference type="EC" id="3.4.13.19"/>
    </reaction>
</comment>
<comment type="catalytic activity">
    <reaction evidence="2">
        <text>leukotriene D4 + H2O = leukotriene E4 + glycine</text>
        <dbReference type="Rhea" id="RHEA:48616"/>
        <dbReference type="ChEBI" id="CHEBI:15377"/>
        <dbReference type="ChEBI" id="CHEBI:57305"/>
        <dbReference type="ChEBI" id="CHEBI:57462"/>
        <dbReference type="ChEBI" id="CHEBI:63166"/>
    </reaction>
    <physiologicalReaction direction="left-to-right" evidence="2">
        <dbReference type="Rhea" id="RHEA:48617"/>
    </physiologicalReaction>
</comment>
<comment type="catalytic activity">
    <reaction evidence="3">
        <text>L-cystine-bis-glycine + 2 H2O = L-cystine + 2 glycine</text>
        <dbReference type="Rhea" id="RHEA:60520"/>
        <dbReference type="ChEBI" id="CHEBI:15377"/>
        <dbReference type="ChEBI" id="CHEBI:35491"/>
        <dbReference type="ChEBI" id="CHEBI:57305"/>
        <dbReference type="ChEBI" id="CHEBI:143812"/>
    </reaction>
</comment>
<comment type="cofactor">
    <cofactor evidence="1 5">
        <name>Zn(2+)</name>
        <dbReference type="ChEBI" id="CHEBI:29105"/>
    </cofactor>
</comment>
<comment type="activity regulation">
    <text evidence="2">Inhibited by L-penicillamine.</text>
</comment>
<comment type="subunit">
    <text evidence="5">Homodimer; disulfide-linked.</text>
</comment>
<comment type="subcellular location">
    <subcellularLocation>
        <location evidence="2">Membrane</location>
        <topology evidence="2">Lipid-anchor</topology>
        <topology evidence="2">GPI-anchor</topology>
    </subcellularLocation>
</comment>
<comment type="similarity">
    <text evidence="5">Belongs to the metallo-dependent hydrolases superfamily. Peptidase M19 family.</text>
</comment>
<dbReference type="EC" id="3.4.13.19" evidence="2"/>
<dbReference type="EMBL" id="BC088195">
    <property type="protein sequence ID" value="AAH88195.1"/>
    <property type="molecule type" value="mRNA"/>
</dbReference>
<dbReference type="RefSeq" id="NP_001011928.1">
    <property type="nucleotide sequence ID" value="NM_001011928.1"/>
</dbReference>
<dbReference type="SMR" id="Q5M872"/>
<dbReference type="FunCoup" id="Q5M872">
    <property type="interactions" value="15"/>
</dbReference>
<dbReference type="STRING" id="10116.ENSRNOP00000031955"/>
<dbReference type="MEROPS" id="M19.002"/>
<dbReference type="GlyCosmos" id="Q5M872">
    <property type="glycosylation" value="2 sites, No reported glycans"/>
</dbReference>
<dbReference type="GlyGen" id="Q5M872">
    <property type="glycosylation" value="2 sites"/>
</dbReference>
<dbReference type="PhosphoSitePlus" id="Q5M872"/>
<dbReference type="PaxDb" id="10116-ENSRNOP00000031955"/>
<dbReference type="GeneID" id="291984"/>
<dbReference type="KEGG" id="rno:291984"/>
<dbReference type="UCSC" id="RGD:1305746">
    <property type="organism name" value="rat"/>
</dbReference>
<dbReference type="AGR" id="RGD:1305746"/>
<dbReference type="CTD" id="64174"/>
<dbReference type="RGD" id="1305746">
    <property type="gene designation" value="Dpep2"/>
</dbReference>
<dbReference type="VEuPathDB" id="HostDB:ENSRNOG00000023303"/>
<dbReference type="eggNOG" id="KOG4127">
    <property type="taxonomic scope" value="Eukaryota"/>
</dbReference>
<dbReference type="HOGENOM" id="CLU_031404_4_1_1"/>
<dbReference type="InParanoid" id="Q5M872"/>
<dbReference type="OrthoDB" id="445695at2759"/>
<dbReference type="PhylomeDB" id="Q5M872"/>
<dbReference type="TreeFam" id="TF324523"/>
<dbReference type="Reactome" id="R-RNO-2142691">
    <property type="pathway name" value="Synthesis of Leukotrienes (LT) and Eoxins (EX)"/>
</dbReference>
<dbReference type="Reactome" id="R-RNO-5423646">
    <property type="pathway name" value="Aflatoxin activation and detoxification"/>
</dbReference>
<dbReference type="PRO" id="PR:Q5M872"/>
<dbReference type="Proteomes" id="UP000002494">
    <property type="component" value="Chromosome 19"/>
</dbReference>
<dbReference type="Bgee" id="ENSRNOG00000023303">
    <property type="expression patterns" value="Expressed in spleen and 16 other cell types or tissues"/>
</dbReference>
<dbReference type="GO" id="GO:0016020">
    <property type="term" value="C:membrane"/>
    <property type="evidence" value="ECO:0000250"/>
    <property type="project" value="UniProtKB"/>
</dbReference>
<dbReference type="GO" id="GO:0098552">
    <property type="term" value="C:side of membrane"/>
    <property type="evidence" value="ECO:0007669"/>
    <property type="project" value="UniProtKB-KW"/>
</dbReference>
<dbReference type="GO" id="GO:0016805">
    <property type="term" value="F:dipeptidase activity"/>
    <property type="evidence" value="ECO:0000250"/>
    <property type="project" value="UniProtKB"/>
</dbReference>
<dbReference type="GO" id="GO:0008238">
    <property type="term" value="F:exopeptidase activity"/>
    <property type="evidence" value="ECO:0000266"/>
    <property type="project" value="RGD"/>
</dbReference>
<dbReference type="GO" id="GO:0046872">
    <property type="term" value="F:metal ion binding"/>
    <property type="evidence" value="ECO:0007669"/>
    <property type="project" value="UniProtKB-KW"/>
</dbReference>
<dbReference type="GO" id="GO:0070573">
    <property type="term" value="F:metallodipeptidase activity"/>
    <property type="evidence" value="ECO:0007669"/>
    <property type="project" value="InterPro"/>
</dbReference>
<dbReference type="GO" id="GO:1901749">
    <property type="term" value="P:leukotriene D4 catabolic process"/>
    <property type="evidence" value="ECO:0000250"/>
    <property type="project" value="UniProtKB"/>
</dbReference>
<dbReference type="GO" id="GO:0006691">
    <property type="term" value="P:leukotriene metabolic process"/>
    <property type="evidence" value="ECO:0000250"/>
    <property type="project" value="UniProtKB"/>
</dbReference>
<dbReference type="GO" id="GO:0006508">
    <property type="term" value="P:proteolysis"/>
    <property type="evidence" value="ECO:0007669"/>
    <property type="project" value="UniProtKB-KW"/>
</dbReference>
<dbReference type="CDD" id="cd01301">
    <property type="entry name" value="rDP_like"/>
    <property type="match status" value="1"/>
</dbReference>
<dbReference type="FunFam" id="3.20.20.140:FF:000030">
    <property type="entry name" value="Dipeptidase"/>
    <property type="match status" value="1"/>
</dbReference>
<dbReference type="Gene3D" id="3.20.20.140">
    <property type="entry name" value="Metal-dependent hydrolases"/>
    <property type="match status" value="1"/>
</dbReference>
<dbReference type="InterPro" id="IPR000180">
    <property type="entry name" value="Dipep_AS"/>
</dbReference>
<dbReference type="InterPro" id="IPR032466">
    <property type="entry name" value="Metal_Hydrolase"/>
</dbReference>
<dbReference type="InterPro" id="IPR008257">
    <property type="entry name" value="Pept_M19"/>
</dbReference>
<dbReference type="PANTHER" id="PTHR10443:SF9">
    <property type="entry name" value="DIPEPTIDASE 2"/>
    <property type="match status" value="1"/>
</dbReference>
<dbReference type="PANTHER" id="PTHR10443">
    <property type="entry name" value="MICROSOMAL DIPEPTIDASE"/>
    <property type="match status" value="1"/>
</dbReference>
<dbReference type="Pfam" id="PF01244">
    <property type="entry name" value="Peptidase_M19"/>
    <property type="match status" value="1"/>
</dbReference>
<dbReference type="SUPFAM" id="SSF51556">
    <property type="entry name" value="Metallo-dependent hydrolases"/>
    <property type="match status" value="1"/>
</dbReference>
<dbReference type="PROSITE" id="PS00869">
    <property type="entry name" value="RENAL_DIPEPTIDASE_1"/>
    <property type="match status" value="1"/>
</dbReference>
<dbReference type="PROSITE" id="PS51365">
    <property type="entry name" value="RENAL_DIPEPTIDASE_2"/>
    <property type="match status" value="1"/>
</dbReference>
<evidence type="ECO:0000250" key="1">
    <source>
        <dbReference type="UniProtKB" id="P16444"/>
    </source>
</evidence>
<evidence type="ECO:0000250" key="2">
    <source>
        <dbReference type="UniProtKB" id="Q8C255"/>
    </source>
</evidence>
<evidence type="ECO:0000250" key="3">
    <source>
        <dbReference type="UniProtKB" id="Q9H4A9"/>
    </source>
</evidence>
<evidence type="ECO:0000255" key="4"/>
<evidence type="ECO:0000255" key="5">
    <source>
        <dbReference type="PROSITE-ProRule" id="PRU10073"/>
    </source>
</evidence>
<evidence type="ECO:0000256" key="6">
    <source>
        <dbReference type="SAM" id="MobiDB-lite"/>
    </source>
</evidence>
<gene>
    <name type="primary">Dpep2</name>
</gene>
<name>DPEP2_RAT</name>
<sequence>MSLKGLEGHWVLSQVFLLVVVLLLLGPSEPLIRAQTKPGIADASTAPSPLRTLTKPAIFSIPTTPGNPNFPDLRDRTRALMQDFPLIDGHNDLPLVLRQFYQNGLQDTNLRNFTHGQTSLNRLKDGFVGAQFWSAYVPCQTQDRDALRLTLEQIDLIRRMCASYSELELVTSVQALNSTQKLACLIGVEGGHSLDNSLAVLRSFYLLGVRYLTLTHTCNTPWAESSSKDVHSFYSSVKGLTSFGEKVVAEMNRLGMMIDLSHVSDATARQALEVSQAPVIFSHSAARAVCPNARNLPDDILQLLKKNGGIVMVTFAVGVLPCNPLANVSTVADHFDHIRTVIGSEFIGVGGDYDGTKQFPQGLEDVSTYPVLIEELLRRGWGEQELQGVLRGNLLRVFRQVEQVREKNKWQSPLEDMIPEEQLDSACHSVLPHRRQYPEKDPPETPDSHTHKLSPKMPYSKSSPLRASSLTIMATFLGLLI</sequence>
<proteinExistence type="evidence at transcript level"/>
<accession>Q5M872</accession>